<dbReference type="EC" id="7.1.1.-"/>
<dbReference type="EMBL" id="DQ231562">
    <property type="status" value="NOT_ANNOTATED_CDS"/>
    <property type="molecule type" value="Genomic_DNA"/>
</dbReference>
<dbReference type="EMBL" id="DQ386163">
    <property type="protein sequence ID" value="ABD47110.1"/>
    <property type="molecule type" value="Genomic_DNA"/>
</dbReference>
<dbReference type="RefSeq" id="YP_635692.1">
    <property type="nucleotide sequence ID" value="NC_008096.2"/>
</dbReference>
<dbReference type="SMR" id="Q27RZ6"/>
<dbReference type="FunCoup" id="Q27RZ6">
    <property type="interactions" value="15"/>
</dbReference>
<dbReference type="STRING" id="4113.Q27RZ6"/>
<dbReference type="GeneID" id="4099908"/>
<dbReference type="KEGG" id="sot:4099908"/>
<dbReference type="InParanoid" id="Q27RZ6"/>
<dbReference type="OrthoDB" id="1893972at2759"/>
<dbReference type="Proteomes" id="UP000011115">
    <property type="component" value="Unassembled WGS sequence"/>
</dbReference>
<dbReference type="GO" id="GO:0009535">
    <property type="term" value="C:chloroplast thylakoid membrane"/>
    <property type="evidence" value="ECO:0007669"/>
    <property type="project" value="UniProtKB-SubCell"/>
</dbReference>
<dbReference type="GO" id="GO:0008137">
    <property type="term" value="F:NADH dehydrogenase (ubiquinone) activity"/>
    <property type="evidence" value="ECO:0007669"/>
    <property type="project" value="InterPro"/>
</dbReference>
<dbReference type="GO" id="GO:0048038">
    <property type="term" value="F:quinone binding"/>
    <property type="evidence" value="ECO:0007669"/>
    <property type="project" value="UniProtKB-KW"/>
</dbReference>
<dbReference type="FunFam" id="1.20.120.1200:FF:000002">
    <property type="entry name" value="NAD(P)H-quinone oxidoreductase subunit 6, chloroplastic"/>
    <property type="match status" value="1"/>
</dbReference>
<dbReference type="Gene3D" id="1.20.120.1200">
    <property type="entry name" value="NADH-ubiquinone/plastoquinone oxidoreductase chain 6, subunit NuoJ"/>
    <property type="match status" value="1"/>
</dbReference>
<dbReference type="InterPro" id="IPR050290">
    <property type="entry name" value="NAD(P)H-Q_Oxidoreduct_6"/>
</dbReference>
<dbReference type="InterPro" id="IPR001457">
    <property type="entry name" value="NADH_UbQ/plastoQ_OxRdtase_su6"/>
</dbReference>
<dbReference type="InterPro" id="IPR042106">
    <property type="entry name" value="Nuo/plastoQ_OxRdtase_6_NuoJ"/>
</dbReference>
<dbReference type="PANTHER" id="PTHR48479">
    <property type="entry name" value="NAD(P)H-QUINONE OXIDOREDUCTASE SUBUNIT 6, CHLOROPLASTIC"/>
    <property type="match status" value="1"/>
</dbReference>
<dbReference type="PANTHER" id="PTHR48479:SF1">
    <property type="entry name" value="NAD(P)H-QUINONE OXIDOREDUCTASE SUBUNIT 6, CHLOROPLASTIC"/>
    <property type="match status" value="1"/>
</dbReference>
<dbReference type="Pfam" id="PF00499">
    <property type="entry name" value="Oxidored_q3"/>
    <property type="match status" value="1"/>
</dbReference>
<organism>
    <name type="scientific">Solanum tuberosum</name>
    <name type="common">Potato</name>
    <dbReference type="NCBI Taxonomy" id="4113"/>
    <lineage>
        <taxon>Eukaryota</taxon>
        <taxon>Viridiplantae</taxon>
        <taxon>Streptophyta</taxon>
        <taxon>Embryophyta</taxon>
        <taxon>Tracheophyta</taxon>
        <taxon>Spermatophyta</taxon>
        <taxon>Magnoliopsida</taxon>
        <taxon>eudicotyledons</taxon>
        <taxon>Gunneridae</taxon>
        <taxon>Pentapetalae</taxon>
        <taxon>asterids</taxon>
        <taxon>lamiids</taxon>
        <taxon>Solanales</taxon>
        <taxon>Solanaceae</taxon>
        <taxon>Solanoideae</taxon>
        <taxon>Solaneae</taxon>
        <taxon>Solanum</taxon>
    </lineage>
</organism>
<evidence type="ECO:0000250" key="1"/>
<evidence type="ECO:0000255" key="2"/>
<evidence type="ECO:0000305" key="3"/>
<protein>
    <recommendedName>
        <fullName>NAD(P)H-quinone oxidoreductase subunit 6, chloroplastic</fullName>
        <ecNumber>7.1.1.-</ecNumber>
    </recommendedName>
    <alternativeName>
        <fullName>NAD(P)H dehydrogenase subunit 6</fullName>
    </alternativeName>
    <alternativeName>
        <fullName>NADH-plastoquinone oxidoreductase subunit 6</fullName>
    </alternativeName>
</protein>
<sequence length="176" mass="19383">MDLSEPIHDFLLVFLGSGLILGGLGVVLLPNPIYSAFSLGLVLICTSLFYILSNSYFVAAAQLLIYVGAINVLIIFAVMFMNGSEYYKDFHLWTVGDGITSMVCISLFISLITTISDTSWYGIIWTTRSNQIIEQDFLSNSQQIGIHLSTDFFLPFELISIILLVALIGAIAVARQ</sequence>
<reference key="1">
    <citation type="journal article" date="2006" name="Plant Cell Rep.">
        <title>The complete chloroplast genome sequences of Solanum tuberosum and comparative analysis with Solanaceae species identified the presence of a 241-bp deletion in cultivated potato chloroplast DNA sequence.</title>
        <authorList>
            <person name="Chung H.-J."/>
            <person name="Jung J.D."/>
            <person name="Park H.-W."/>
            <person name="Kim J.-H."/>
            <person name="Cha H.W."/>
            <person name="Min S.R."/>
            <person name="Jeong W.-J."/>
            <person name="Liu J.R."/>
        </authorList>
    </citation>
    <scope>NUCLEOTIDE SEQUENCE [LARGE SCALE GENOMIC DNA]</scope>
    <source>
        <strain>cv. Desiree</strain>
    </source>
</reference>
<reference key="2">
    <citation type="submission" date="2006-02" db="EMBL/GenBank/DDBJ databases">
        <title>Complete chloroplast genome sequences of Solanum tuberosum cultivar Desiree and comparative analyses with other Solanaceae genomes.</title>
        <authorList>
            <person name="Gargano D."/>
            <person name="Scotti N."/>
            <person name="Vezzi A."/>
            <person name="Bilardi A."/>
            <person name="Valle G."/>
            <person name="Grillo S."/>
            <person name="Cardi T."/>
        </authorList>
    </citation>
    <scope>NUCLEOTIDE SEQUENCE [LARGE SCALE GENOMIC DNA]</scope>
    <source>
        <strain>cv. Desiree</strain>
    </source>
</reference>
<keyword id="KW-0150">Chloroplast</keyword>
<keyword id="KW-0472">Membrane</keyword>
<keyword id="KW-0520">NAD</keyword>
<keyword id="KW-0521">NADP</keyword>
<keyword id="KW-0934">Plastid</keyword>
<keyword id="KW-0618">Plastoquinone</keyword>
<keyword id="KW-0874">Quinone</keyword>
<keyword id="KW-1185">Reference proteome</keyword>
<keyword id="KW-0793">Thylakoid</keyword>
<keyword id="KW-1278">Translocase</keyword>
<keyword id="KW-0812">Transmembrane</keyword>
<keyword id="KW-1133">Transmembrane helix</keyword>
<keyword id="KW-0813">Transport</keyword>
<accession>Q27RZ6</accession>
<name>NU6C_SOLTU</name>
<proteinExistence type="inferred from homology"/>
<geneLocation type="chloroplast"/>
<comment type="function">
    <text evidence="1">NDH shuttles electrons from NAD(P)H:plastoquinone, via FMN and iron-sulfur (Fe-S) centers, to quinones in the photosynthetic chain and possibly in a chloroplast respiratory chain. The immediate electron acceptor for the enzyme in this species is believed to be plastoquinone. Couples the redox reaction to proton translocation, and thus conserves the redox energy in a proton gradient (By similarity).</text>
</comment>
<comment type="catalytic activity">
    <reaction>
        <text>a plastoquinone + NADH + (n+1) H(+)(in) = a plastoquinol + NAD(+) + n H(+)(out)</text>
        <dbReference type="Rhea" id="RHEA:42608"/>
        <dbReference type="Rhea" id="RHEA-COMP:9561"/>
        <dbReference type="Rhea" id="RHEA-COMP:9562"/>
        <dbReference type="ChEBI" id="CHEBI:15378"/>
        <dbReference type="ChEBI" id="CHEBI:17757"/>
        <dbReference type="ChEBI" id="CHEBI:57540"/>
        <dbReference type="ChEBI" id="CHEBI:57945"/>
        <dbReference type="ChEBI" id="CHEBI:62192"/>
    </reaction>
</comment>
<comment type="catalytic activity">
    <reaction>
        <text>a plastoquinone + NADPH + (n+1) H(+)(in) = a plastoquinol + NADP(+) + n H(+)(out)</text>
        <dbReference type="Rhea" id="RHEA:42612"/>
        <dbReference type="Rhea" id="RHEA-COMP:9561"/>
        <dbReference type="Rhea" id="RHEA-COMP:9562"/>
        <dbReference type="ChEBI" id="CHEBI:15378"/>
        <dbReference type="ChEBI" id="CHEBI:17757"/>
        <dbReference type="ChEBI" id="CHEBI:57783"/>
        <dbReference type="ChEBI" id="CHEBI:58349"/>
        <dbReference type="ChEBI" id="CHEBI:62192"/>
    </reaction>
</comment>
<comment type="subunit">
    <text evidence="1">NDH is composed of at least 16 different subunits, 5 of which are encoded in the nucleus.</text>
</comment>
<comment type="subcellular location">
    <subcellularLocation>
        <location evidence="1">Plastid</location>
        <location evidence="1">Chloroplast thylakoid membrane</location>
        <topology evidence="1">Multi-pass membrane protein</topology>
    </subcellularLocation>
</comment>
<comment type="similarity">
    <text evidence="3">Belongs to the complex I subunit 6 family.</text>
</comment>
<feature type="chain" id="PRO_0000277581" description="NAD(P)H-quinone oxidoreductase subunit 6, chloroplastic">
    <location>
        <begin position="1"/>
        <end position="176"/>
    </location>
</feature>
<feature type="transmembrane region" description="Helical" evidence="2">
    <location>
        <begin position="10"/>
        <end position="30"/>
    </location>
</feature>
<feature type="transmembrane region" description="Helical" evidence="2">
    <location>
        <begin position="32"/>
        <end position="52"/>
    </location>
</feature>
<feature type="transmembrane region" description="Helical" evidence="2">
    <location>
        <begin position="61"/>
        <end position="81"/>
    </location>
</feature>
<feature type="transmembrane region" description="Helical" evidence="2">
    <location>
        <begin position="92"/>
        <end position="112"/>
    </location>
</feature>
<feature type="transmembrane region" description="Helical" evidence="2">
    <location>
        <begin position="152"/>
        <end position="172"/>
    </location>
</feature>
<feature type="sequence conflict" description="In Ref. 1; DQ231562." evidence="3" ref="1">
    <original>ARQ</original>
    <variation>GSSIKNFY</variation>
    <location>
        <begin position="174"/>
        <end position="176"/>
    </location>
</feature>
<gene>
    <name type="primary">ndhG</name>
</gene>